<protein>
    <recommendedName>
        <fullName>Lipolysis-activating peptide 1-alpha chain</fullName>
        <shortName>BotLVP1-alpha</shortName>
        <shortName>LVP1-alpha</shortName>
    </recommendedName>
    <component>
        <recommendedName>
            <fullName>Neurotoxin BmKBTx-like</fullName>
        </recommendedName>
    </component>
</protein>
<reference key="1">
    <citation type="journal article" date="2005" name="Biochim. Biophys. Acta">
        <title>Isolation and molecular characterization of LVP1 lipolysis activating peptide from scorpion Buthus occitanus tunetanus.</title>
        <authorList>
            <person name="Soudani N."/>
            <person name="Gharbi-Chihi J."/>
            <person name="Srairi-Abid N."/>
            <person name="Martin-El Yazidi C."/>
            <person name="Planells R."/>
            <person name="Margotat A."/>
            <person name="Torresani J."/>
            <person name="El Ayeb M."/>
        </authorList>
    </citation>
    <scope>NUCLEOTIDE SEQUENCE [MRNA]</scope>
    <scope>PROTEIN SEQUENCE OF 23-66 AND 73-87</scope>
    <scope>FUNCTION</scope>
    <scope>SUBUNIT</scope>
    <scope>SUBCELLULAR LOCATION</scope>
    <scope>MASS SPECTROMETRY</scope>
    <source>
        <tissue>Venom</tissue>
        <tissue>Venom gland</tissue>
    </source>
</reference>
<dbReference type="SMR" id="P84810"/>
<dbReference type="GO" id="GO:0005576">
    <property type="term" value="C:extracellular region"/>
    <property type="evidence" value="ECO:0000314"/>
    <property type="project" value="UniProtKB"/>
</dbReference>
<dbReference type="GO" id="GO:0015459">
    <property type="term" value="F:potassium channel regulator activity"/>
    <property type="evidence" value="ECO:0007669"/>
    <property type="project" value="UniProtKB-KW"/>
</dbReference>
<dbReference type="GO" id="GO:0019871">
    <property type="term" value="F:sodium channel inhibitor activity"/>
    <property type="evidence" value="ECO:0007669"/>
    <property type="project" value="InterPro"/>
</dbReference>
<dbReference type="GO" id="GO:0090729">
    <property type="term" value="F:toxin activity"/>
    <property type="evidence" value="ECO:0007669"/>
    <property type="project" value="UniProtKB-KW"/>
</dbReference>
<dbReference type="GO" id="GO:0006952">
    <property type="term" value="P:defense response"/>
    <property type="evidence" value="ECO:0000314"/>
    <property type="project" value="UniProtKB"/>
</dbReference>
<dbReference type="GO" id="GO:0050996">
    <property type="term" value="P:positive regulation of lipid catabolic process"/>
    <property type="evidence" value="ECO:0000314"/>
    <property type="project" value="UniProtKB"/>
</dbReference>
<dbReference type="CDD" id="cd23106">
    <property type="entry name" value="neurotoxins_LC_scorpion"/>
    <property type="match status" value="1"/>
</dbReference>
<dbReference type="FunFam" id="3.30.30.10:FF:000008">
    <property type="entry name" value="Toxin-like peptide AaF1CA7"/>
    <property type="match status" value="1"/>
</dbReference>
<dbReference type="Gene3D" id="3.30.30.10">
    <property type="entry name" value="Knottin, scorpion toxin-like"/>
    <property type="match status" value="1"/>
</dbReference>
<dbReference type="InterPro" id="IPR044062">
    <property type="entry name" value="LCN-type_CS_alpha_beta_dom"/>
</dbReference>
<dbReference type="InterPro" id="IPR036574">
    <property type="entry name" value="Scorpion_toxin-like_sf"/>
</dbReference>
<dbReference type="InterPro" id="IPR002061">
    <property type="entry name" value="Scorpion_toxinL/defensin"/>
</dbReference>
<dbReference type="Pfam" id="PF00537">
    <property type="entry name" value="Toxin_3"/>
    <property type="match status" value="1"/>
</dbReference>
<dbReference type="SUPFAM" id="SSF57095">
    <property type="entry name" value="Scorpion toxin-like"/>
    <property type="match status" value="1"/>
</dbReference>
<dbReference type="PROSITE" id="PS51863">
    <property type="entry name" value="LCN_CSAB"/>
    <property type="match status" value="1"/>
</dbReference>
<evidence type="ECO:0000250" key="1"/>
<evidence type="ECO:0000255" key="2">
    <source>
        <dbReference type="PROSITE-ProRule" id="PRU01210"/>
    </source>
</evidence>
<evidence type="ECO:0000269" key="3">
    <source>
    </source>
</evidence>
<evidence type="ECO:0000305" key="4"/>
<evidence type="ECO:0000305" key="5">
    <source>
    </source>
</evidence>
<keyword id="KW-0903">Direct protein sequencing</keyword>
<keyword id="KW-1015">Disulfide bond</keyword>
<keyword id="KW-1213">G-protein coupled receptor impairing toxin</keyword>
<keyword id="KW-0872">Ion channel impairing toxin</keyword>
<keyword id="KW-0528">Neurotoxin</keyword>
<keyword id="KW-0632">Potassium channel impairing toxin</keyword>
<keyword id="KW-0691">RNA editing</keyword>
<keyword id="KW-0964">Secreted</keyword>
<keyword id="KW-0732">Signal</keyword>
<keyword id="KW-0800">Toxin</keyword>
<keyword id="KW-1220">Voltage-gated potassium channel impairing toxin</keyword>
<keyword id="KW-0738">Voltage-gated sodium channel impairing toxin</keyword>
<feature type="signal peptide" evidence="3">
    <location>
        <begin position="1"/>
        <end position="22"/>
    </location>
</feature>
<feature type="chain" id="PRO_0000232422" description="Lipolysis-activating peptide 1-alpha chain">
    <location>
        <begin position="23"/>
        <end position="91"/>
    </location>
</feature>
<feature type="chain" id="PRO_0000394866" description="Neurotoxin BmKBTx-like" evidence="1">
    <location>
        <begin position="23"/>
        <end position="78"/>
    </location>
</feature>
<feature type="domain" description="LCN-type CS-alpha/beta" evidence="2">
    <location>
        <begin position="24"/>
        <end position="87"/>
    </location>
</feature>
<feature type="disulfide bond" evidence="2">
    <location>
        <begin position="38"/>
        <end position="61"/>
    </location>
</feature>
<feature type="disulfide bond" evidence="2">
    <location>
        <begin position="47"/>
        <end position="66"/>
    </location>
</feature>
<feature type="disulfide bond" evidence="2">
    <location>
        <begin position="51"/>
        <end position="68"/>
    </location>
</feature>
<feature type="disulfide bond" description="Interchain (with C-90 in BotLVP1 chain beta)" evidence="4">
    <location>
        <position position="86"/>
    </location>
</feature>
<feature type="sequence conflict" description="In Ref. 1; AA sequence." evidence="4" ref="1">
    <location>
        <position position="80"/>
    </location>
</feature>
<organism>
    <name type="scientific">Buthus occitanus tunetanus</name>
    <name type="common">Common European scorpion</name>
    <name type="synonym">Buthus tunetanus</name>
    <dbReference type="NCBI Taxonomy" id="6871"/>
    <lineage>
        <taxon>Eukaryota</taxon>
        <taxon>Metazoa</taxon>
        <taxon>Ecdysozoa</taxon>
        <taxon>Arthropoda</taxon>
        <taxon>Chelicerata</taxon>
        <taxon>Arachnida</taxon>
        <taxon>Scorpiones</taxon>
        <taxon>Buthida</taxon>
        <taxon>Buthoidea</taxon>
        <taxon>Buthidae</taxon>
        <taxon>Buthus</taxon>
    </lineage>
</organism>
<accession>P84810</accession>
<name>LV1A_BUTOC</name>
<sequence>MMKLVLFGIIVILFSLIGSIHGISGNYPLNPYGGYYYCTILGENEYCKKICRIHGVRYGYCYDSACWCETLKDEDVSVWNAVKKHCKNPYL</sequence>
<comment type="function">
    <text evidence="3">The heterodimer non-edited LVP1 induces lipolysis in rat adipocytes. Induction of lipolysis by LVP1 appears to be mediated through the beta-2 adrenergic receptor pathway (ADRB2). Intracerebroventricular injection is not toxic to mice.</text>
</comment>
<comment type="function">
    <text evidence="5">The edited BmKBTx-like, similar to beta-toxins, may modulate voltage-gated sodium channels (Nav) and may block voltage-gated potassium channels (Kv).</text>
</comment>
<comment type="subunit">
    <text evidence="3">Monomer (edited version) and heterodimer (non-edited version) of this alpha chain and a beta chain (AC P84809).</text>
</comment>
<comment type="subcellular location">
    <subcellularLocation>
        <location evidence="3">Secreted</location>
    </subcellularLocation>
</comment>
<comment type="tissue specificity">
    <text evidence="5">Expressed by the venom gland.</text>
</comment>
<comment type="domain">
    <text evidence="4">Has the structural arrangement of an alpha-helix connected to antiparallel beta-sheets by disulfide bonds (CS-alpha/beta).</text>
</comment>
<comment type="RNA editing">
    <location>
        <position position="79" evidence="1"/>
    </location>
    <text evidence="1">The stop codon (UGA) at position 79 is created by RNA editing.</text>
</comment>
<comment type="mass spectrometry">
    <molecule>Lipolysis-activating peptide 1-alpha chain</molecule>
</comment>
<comment type="similarity">
    <text evidence="4">Belongs to the long (3 C-C) scorpion toxin superfamily.</text>
</comment>
<proteinExistence type="evidence at protein level"/>